<dbReference type="EMBL" id="CP000089">
    <property type="protein sequence ID" value="AAZ45512.1"/>
    <property type="molecule type" value="Genomic_DNA"/>
</dbReference>
<dbReference type="SMR" id="Q47I19"/>
<dbReference type="STRING" id="159087.Daro_0756"/>
<dbReference type="KEGG" id="dar:Daro_0756"/>
<dbReference type="eggNOG" id="COG1706">
    <property type="taxonomic scope" value="Bacteria"/>
</dbReference>
<dbReference type="HOGENOM" id="CLU_045235_1_0_4"/>
<dbReference type="GO" id="GO:0009428">
    <property type="term" value="C:bacterial-type flagellum basal body, distal rod, P ring"/>
    <property type="evidence" value="ECO:0007669"/>
    <property type="project" value="InterPro"/>
</dbReference>
<dbReference type="GO" id="GO:0030288">
    <property type="term" value="C:outer membrane-bounded periplasmic space"/>
    <property type="evidence" value="ECO:0007669"/>
    <property type="project" value="InterPro"/>
</dbReference>
<dbReference type="GO" id="GO:0005198">
    <property type="term" value="F:structural molecule activity"/>
    <property type="evidence" value="ECO:0007669"/>
    <property type="project" value="InterPro"/>
</dbReference>
<dbReference type="GO" id="GO:0071973">
    <property type="term" value="P:bacterial-type flagellum-dependent cell motility"/>
    <property type="evidence" value="ECO:0007669"/>
    <property type="project" value="InterPro"/>
</dbReference>
<dbReference type="HAMAP" id="MF_00416">
    <property type="entry name" value="FlgI"/>
    <property type="match status" value="1"/>
</dbReference>
<dbReference type="InterPro" id="IPR001782">
    <property type="entry name" value="Flag_FlgI"/>
</dbReference>
<dbReference type="NCBIfam" id="NF003676">
    <property type="entry name" value="PRK05303.1"/>
    <property type="match status" value="1"/>
</dbReference>
<dbReference type="PANTHER" id="PTHR30381">
    <property type="entry name" value="FLAGELLAR P-RING PERIPLASMIC PROTEIN FLGI"/>
    <property type="match status" value="1"/>
</dbReference>
<dbReference type="PANTHER" id="PTHR30381:SF0">
    <property type="entry name" value="FLAGELLAR P-RING PROTEIN"/>
    <property type="match status" value="1"/>
</dbReference>
<dbReference type="Pfam" id="PF02119">
    <property type="entry name" value="FlgI"/>
    <property type="match status" value="1"/>
</dbReference>
<dbReference type="PRINTS" id="PR01010">
    <property type="entry name" value="FLGPRINGFLGI"/>
</dbReference>
<reference key="1">
    <citation type="journal article" date="2009" name="BMC Genomics">
        <title>Metabolic analysis of the soil microbe Dechloromonas aromatica str. RCB: indications of a surprisingly complex life-style and cryptic anaerobic pathways for aromatic degradation.</title>
        <authorList>
            <person name="Salinero K.K."/>
            <person name="Keller K."/>
            <person name="Feil W.S."/>
            <person name="Feil H."/>
            <person name="Trong S."/>
            <person name="Di Bartolo G."/>
            <person name="Lapidus A."/>
        </authorList>
    </citation>
    <scope>NUCLEOTIDE SEQUENCE [LARGE SCALE GENOMIC DNA]</scope>
    <source>
        <strain>RCB</strain>
    </source>
</reference>
<protein>
    <recommendedName>
        <fullName evidence="1">Flagellar P-ring protein</fullName>
    </recommendedName>
    <alternativeName>
        <fullName evidence="1">Basal body P-ring protein</fullName>
    </alternativeName>
</protein>
<feature type="signal peptide" evidence="1">
    <location>
        <begin position="1"/>
        <end position="29"/>
    </location>
</feature>
<feature type="chain" id="PRO_0000236299" description="Flagellar P-ring protein">
    <location>
        <begin position="30"/>
        <end position="364"/>
    </location>
</feature>
<sequence>MKTIGGKVFRHAAILAACVLPLWCQPALAERIKDLASIQGVRSNQLIGYGIVVGLDNTGDQTTQTPFTTQAMSNMLSQLGVNLTQEQSQKLQLKNVAAAMVTANLPSFSRPGQPIDVTVSSMGNAKSLRGGTLLMTQLKGADGQVYAIAQGNVLVGGVGASSGGSKVTVNHLSAGRIPGGATVERAVPTAVGQGGVVYYELANSDFGTVQKVVDAINRTAGAGTAQAVDGRRMVVKVPEDADSRVSFLGRIENLDVQPVAGVAKVVINPRTGSVVMNQKVTLDACAVAHGSLSVVVDAGQPQFGQAADIQVKQDNGSLMNVKAGANLADVVKALNALGANPLDLLAILQAMKAAGALRADLEVI</sequence>
<name>FLGI_DECAR</name>
<comment type="function">
    <text evidence="1">Assembles around the rod to form the L-ring and probably protects the motor/basal body from shearing forces during rotation.</text>
</comment>
<comment type="subunit">
    <text evidence="1">The basal body constitutes a major portion of the flagellar organelle and consists of four rings (L,P,S, and M) mounted on a central rod.</text>
</comment>
<comment type="subcellular location">
    <subcellularLocation>
        <location evidence="1">Periplasm</location>
    </subcellularLocation>
    <subcellularLocation>
        <location evidence="1">Bacterial flagellum basal body</location>
    </subcellularLocation>
</comment>
<comment type="similarity">
    <text evidence="1">Belongs to the FlgI family.</text>
</comment>
<organism>
    <name type="scientific">Dechloromonas aromatica (strain RCB)</name>
    <dbReference type="NCBI Taxonomy" id="159087"/>
    <lineage>
        <taxon>Bacteria</taxon>
        <taxon>Pseudomonadati</taxon>
        <taxon>Pseudomonadota</taxon>
        <taxon>Betaproteobacteria</taxon>
        <taxon>Rhodocyclales</taxon>
        <taxon>Azonexaceae</taxon>
        <taxon>Dechloromonas</taxon>
    </lineage>
</organism>
<accession>Q47I19</accession>
<evidence type="ECO:0000255" key="1">
    <source>
        <dbReference type="HAMAP-Rule" id="MF_00416"/>
    </source>
</evidence>
<keyword id="KW-0975">Bacterial flagellum</keyword>
<keyword id="KW-0574">Periplasm</keyword>
<keyword id="KW-0732">Signal</keyword>
<proteinExistence type="inferred from homology"/>
<gene>
    <name evidence="1" type="primary">flgI</name>
    <name type="ordered locus">Daro_0756</name>
</gene>